<accession>P0A4N7</accession>
<accession>P50989</accession>
<accession>Q07742</accession>
<protein>
    <recommendedName>
        <fullName evidence="5">Oligopeptide transport system permease protein OppB</fullName>
    </recommendedName>
</protein>
<reference key="1">
    <citation type="journal article" date="1993" name="J. Bacteriol.">
        <title>Genetic and biochemical characterization of the oligopeptide transport system of Lactococcus lactis.</title>
        <authorList>
            <person name="Tynkkynen S."/>
            <person name="Buist G."/>
            <person name="Kunji E."/>
            <person name="Kok J."/>
            <person name="Poolman B."/>
            <person name="Venema G."/>
            <person name="Haandrikman A."/>
        </authorList>
    </citation>
    <scope>NUCLEOTIDE SEQUENCE [GENOMIC DNA]</scope>
    <scope>FUNCTION</scope>
    <scope>SUBUNIT</scope>
    <source>
        <strain>SSL135</strain>
    </source>
</reference>
<reference key="2">
    <citation type="journal article" date="2001" name="Genome Res.">
        <title>The complete genome sequence of the lactic acid bacterium Lactococcus lactis ssp. lactis IL1403.</title>
        <authorList>
            <person name="Bolotin A."/>
            <person name="Wincker P."/>
            <person name="Mauger S."/>
            <person name="Jaillon O."/>
            <person name="Malarme K."/>
            <person name="Weissenbach J."/>
            <person name="Ehrlich S.D."/>
            <person name="Sorokin A."/>
        </authorList>
    </citation>
    <scope>NUCLEOTIDE SEQUENCE [LARGE SCALE GENOMIC DNA]</scope>
    <source>
        <strain>IL1403</strain>
    </source>
</reference>
<organism>
    <name type="scientific">Lactococcus lactis subsp. lactis (strain IL1403)</name>
    <name type="common">Streptococcus lactis</name>
    <dbReference type="NCBI Taxonomy" id="272623"/>
    <lineage>
        <taxon>Bacteria</taxon>
        <taxon>Bacillati</taxon>
        <taxon>Bacillota</taxon>
        <taxon>Bacilli</taxon>
        <taxon>Lactobacillales</taxon>
        <taxon>Streptococcaceae</taxon>
        <taxon>Lactococcus</taxon>
    </lineage>
</organism>
<keyword id="KW-1003">Cell membrane</keyword>
<keyword id="KW-0472">Membrane</keyword>
<keyword id="KW-0571">Peptide transport</keyword>
<keyword id="KW-0653">Protein transport</keyword>
<keyword id="KW-1185">Reference proteome</keyword>
<keyword id="KW-0812">Transmembrane</keyword>
<keyword id="KW-1133">Transmembrane helix</keyword>
<keyword id="KW-0813">Transport</keyword>
<dbReference type="EMBL" id="L18760">
    <property type="protein sequence ID" value="AAA16165.1"/>
    <property type="molecule type" value="Unassigned_DNA"/>
</dbReference>
<dbReference type="EMBL" id="AE005176">
    <property type="protein sequence ID" value="AAK05937.1"/>
    <property type="molecule type" value="Genomic_DNA"/>
</dbReference>
<dbReference type="PIR" id="G86854">
    <property type="entry name" value="G86854"/>
</dbReference>
<dbReference type="RefSeq" id="NP_267996.1">
    <property type="nucleotide sequence ID" value="NC_002662.1"/>
</dbReference>
<dbReference type="RefSeq" id="WP_010906163.1">
    <property type="nucleotide sequence ID" value="NC_002662.1"/>
</dbReference>
<dbReference type="SMR" id="P0A4N7"/>
<dbReference type="TCDB" id="3.A.1.5.10">
    <property type="family name" value="the atp-binding cassette (abc) superfamily"/>
</dbReference>
<dbReference type="PaxDb" id="272623-L91252"/>
<dbReference type="EnsemblBacteria" id="AAK05937">
    <property type="protein sequence ID" value="AAK05937"/>
    <property type="gene ID" value="L91252"/>
</dbReference>
<dbReference type="KEGG" id="lla:L91252"/>
<dbReference type="PATRIC" id="fig|272623.7.peg.1970"/>
<dbReference type="eggNOG" id="COG0601">
    <property type="taxonomic scope" value="Bacteria"/>
</dbReference>
<dbReference type="HOGENOM" id="CLU_036879_1_2_9"/>
<dbReference type="OrthoDB" id="9773683at2"/>
<dbReference type="Proteomes" id="UP000002196">
    <property type="component" value="Chromosome"/>
</dbReference>
<dbReference type="GO" id="GO:0005886">
    <property type="term" value="C:plasma membrane"/>
    <property type="evidence" value="ECO:0007669"/>
    <property type="project" value="UniProtKB-SubCell"/>
</dbReference>
<dbReference type="GO" id="GO:0015833">
    <property type="term" value="P:peptide transport"/>
    <property type="evidence" value="ECO:0007669"/>
    <property type="project" value="UniProtKB-KW"/>
</dbReference>
<dbReference type="GO" id="GO:0015031">
    <property type="term" value="P:protein transport"/>
    <property type="evidence" value="ECO:0007669"/>
    <property type="project" value="UniProtKB-KW"/>
</dbReference>
<dbReference type="GO" id="GO:0055085">
    <property type="term" value="P:transmembrane transport"/>
    <property type="evidence" value="ECO:0007669"/>
    <property type="project" value="InterPro"/>
</dbReference>
<dbReference type="CDD" id="cd06261">
    <property type="entry name" value="TM_PBP2"/>
    <property type="match status" value="1"/>
</dbReference>
<dbReference type="Gene3D" id="1.10.3720.10">
    <property type="entry name" value="MetI-like"/>
    <property type="match status" value="1"/>
</dbReference>
<dbReference type="InterPro" id="IPR045621">
    <property type="entry name" value="BPD_transp_1_N"/>
</dbReference>
<dbReference type="InterPro" id="IPR000515">
    <property type="entry name" value="MetI-like"/>
</dbReference>
<dbReference type="InterPro" id="IPR035906">
    <property type="entry name" value="MetI-like_sf"/>
</dbReference>
<dbReference type="PANTHER" id="PTHR43163">
    <property type="entry name" value="DIPEPTIDE TRANSPORT SYSTEM PERMEASE PROTEIN DPPB-RELATED"/>
    <property type="match status" value="1"/>
</dbReference>
<dbReference type="PANTHER" id="PTHR43163:SF6">
    <property type="entry name" value="DIPEPTIDE TRANSPORT SYSTEM PERMEASE PROTEIN DPPB-RELATED"/>
    <property type="match status" value="1"/>
</dbReference>
<dbReference type="Pfam" id="PF00528">
    <property type="entry name" value="BPD_transp_1"/>
    <property type="match status" value="1"/>
</dbReference>
<dbReference type="Pfam" id="PF19300">
    <property type="entry name" value="BPD_transp_1_N"/>
    <property type="match status" value="1"/>
</dbReference>
<dbReference type="SUPFAM" id="SSF161098">
    <property type="entry name" value="MetI-like"/>
    <property type="match status" value="1"/>
</dbReference>
<dbReference type="PROSITE" id="PS50928">
    <property type="entry name" value="ABC_TM1"/>
    <property type="match status" value="1"/>
</dbReference>
<name>OPPB_LACLA</name>
<comment type="function">
    <text evidence="4 5">Part of the ABC transporter complex OppABCDF involved in the uptake of oligopeptides (PubMed:8244921). Probably responsible for the translocation of the substrate across the membrane (Probable). Essential for uptake of peptides larger than three amino acids and for growth in milk (PubMed:8244921).</text>
</comment>
<comment type="subunit">
    <text evidence="6">The complex is composed of two ATP-binding proteins (OppD and OppF), two transmembrane proteins (OppB and OppC) and a solute-binding protein (OppA).</text>
</comment>
<comment type="subcellular location">
    <subcellularLocation>
        <location evidence="1">Cell membrane</location>
        <topology evidence="2">Multi-pass membrane protein</topology>
    </subcellularLocation>
</comment>
<comment type="similarity">
    <text evidence="5">Belongs to the binding-protein-dependent transport system permease family. OppBC subfamily.</text>
</comment>
<feature type="chain" id="PRO_0000060135" description="Oligopeptide transport system permease protein OppB">
    <location>
        <begin position="1"/>
        <end position="319"/>
    </location>
</feature>
<feature type="transmembrane region" description="Helical" evidence="3">
    <location>
        <begin position="9"/>
        <end position="29"/>
    </location>
</feature>
<feature type="transmembrane region" description="Helical" evidence="3">
    <location>
        <begin position="99"/>
        <end position="119"/>
    </location>
</feature>
<feature type="transmembrane region" description="Helical" evidence="3">
    <location>
        <begin position="137"/>
        <end position="157"/>
    </location>
</feature>
<feature type="transmembrane region" description="Helical" evidence="3">
    <location>
        <begin position="183"/>
        <end position="203"/>
    </location>
</feature>
<feature type="transmembrane region" description="Helical" evidence="3">
    <location>
        <begin position="248"/>
        <end position="268"/>
    </location>
</feature>
<feature type="transmembrane region" description="Helical" evidence="3">
    <location>
        <begin position="289"/>
        <end position="309"/>
    </location>
</feature>
<feature type="domain" description="ABC transmembrane type-1" evidence="3">
    <location>
        <begin position="95"/>
        <end position="305"/>
    </location>
</feature>
<feature type="sequence conflict" description="In Ref. 1; AAA16165." evidence="5" ref="1">
    <original>L</original>
    <variation>S</variation>
    <location>
        <position position="297"/>
    </location>
</feature>
<feature type="sequence conflict" description="In Ref. 1; AAA16165." evidence="5" ref="1">
    <original>S</original>
    <variation>P</variation>
    <location>
        <position position="305"/>
    </location>
</feature>
<gene>
    <name type="primary">oppB</name>
    <name type="ordered locus">LL1839</name>
    <name type="ORF">L91252</name>
</gene>
<sequence>MWKVIIRRILLMIPQLFILSILVFFFAKLMPGDPFSGLIGPHTDPHEVEALRRAAGLYDPWWEQYLRWLGNAIHGNLGMSYNLKEPVMTVIGHRAINTFWMSLLSVILTYLFAIPMSIVAARNEGKWQDQLWLTYNSITFGIPPYVFYLLIIFIFGYSLNWFPTGGTVSPDAMGIIPVFFSKIYHMILPAFSLAVFGTVGIFTYFRSGILDEQTQDYVRTARAKGVKEKVIFRRHILRNASLPIASNFGFVITGLLGGAIFAETIFGYPGLGQLFITSISGRDYSMITALILLNGFLGLLGALLSDIIMAMVDPRIRIQ</sequence>
<evidence type="ECO:0000250" key="1">
    <source>
        <dbReference type="UniProtKB" id="P24138"/>
    </source>
</evidence>
<evidence type="ECO:0000255" key="2"/>
<evidence type="ECO:0000255" key="3">
    <source>
        <dbReference type="PROSITE-ProRule" id="PRU00441"/>
    </source>
</evidence>
<evidence type="ECO:0000269" key="4">
    <source>
    </source>
</evidence>
<evidence type="ECO:0000305" key="5"/>
<evidence type="ECO:0000305" key="6">
    <source>
    </source>
</evidence>
<proteinExistence type="evidence at protein level"/>